<proteinExistence type="evidence at protein level"/>
<name>ARVC_MOUSE</name>
<protein>
    <recommendedName>
        <fullName evidence="8">Splicing regulator ARVCF</fullName>
    </recommendedName>
    <alternativeName>
        <fullName>Armadillo repeat protein deleted in velo-cardio-facial syndrome homolog</fullName>
    </alternativeName>
</protein>
<accession>P98203</accession>
<accession>Q6PGJ6</accession>
<accession>Q8BQ36</accession>
<accession>Q8BRF2</accession>
<accession>Q8C3U7</accession>
<accession>Q924L2</accession>
<accession>Q924L3</accession>
<accession>Q924L4</accession>
<accession>Q924L5</accession>
<comment type="function">
    <text evidence="2">Contributes to the regulation of alternative splicing of pre-mRNAs.</text>
</comment>
<comment type="subunit">
    <text evidence="2">Component of a ribonucleoprotein complex containing mRNAs and RNA-binding proteins including DDX5, HNRNPH2 and SRSF1 as well as ARVCF (By similarity). Interacts (via the extreme C-terminus) with FRMPD2 (via the PDZ 2 domain). Interacts with CCDC85B (By similarity).</text>
</comment>
<comment type="subcellular location">
    <subcellularLocation>
        <location evidence="2">Cell junction</location>
        <location evidence="2">Adherens junction</location>
    </subcellularLocation>
    <subcellularLocation>
        <location evidence="2">Nucleus</location>
    </subcellularLocation>
    <subcellularLocation>
        <location evidence="2">Cytoplasm</location>
    </subcellularLocation>
    <text evidence="1">In heart, localizes at area composita, the mixed-type junctional structure composed of both desmosomal and adherens junctional proteins.</text>
</comment>
<comment type="alternative products">
    <event type="alternative splicing"/>
    <isoform>
        <id>P98203-1</id>
        <name>1</name>
        <name>A1</name>
        <sequence type="displayed"/>
    </isoform>
    <isoform>
        <id>P98203-2</id>
        <name>2</name>
        <name>A2</name>
        <sequence type="described" ref="VSP_014923"/>
    </isoform>
    <isoform>
        <id>P98203-4</id>
        <name>4</name>
        <name>B2</name>
        <sequence type="described" ref="VSP_014922 VSP_014923"/>
    </isoform>
    <isoform>
        <id>P98203-5</id>
        <name>5</name>
        <name>B1</name>
        <sequence type="described" ref="VSP_014922"/>
    </isoform>
</comment>
<comment type="similarity">
    <text evidence="8">Belongs to the beta-catenin family.</text>
</comment>
<comment type="sequence caution" evidence="8">
    <conflict type="miscellaneous discrepancy">
        <sequence resource="EMBL" id="AJ243418"/>
    </conflict>
    <text>Aberrant splicing.</text>
</comment>
<feature type="chain" id="PRO_0000064295" description="Splicing regulator ARVCF">
    <location>
        <begin position="1"/>
        <end position="962"/>
    </location>
</feature>
<feature type="repeat" description="ARM 1">
    <location>
        <begin position="350"/>
        <end position="389"/>
    </location>
</feature>
<feature type="repeat" description="ARM 2">
    <location>
        <begin position="392"/>
        <end position="431"/>
    </location>
</feature>
<feature type="repeat" description="ARM 3">
    <location>
        <begin position="435"/>
        <end position="469"/>
    </location>
</feature>
<feature type="repeat" description="ARM 4">
    <location>
        <begin position="470"/>
        <end position="510"/>
    </location>
</feature>
<feature type="repeat" description="ARM 5">
    <location>
        <begin position="528"/>
        <end position="567"/>
    </location>
</feature>
<feature type="repeat" description="ARM 6">
    <location>
        <begin position="577"/>
        <end position="623"/>
    </location>
</feature>
<feature type="repeat" description="ARM 7">
    <location>
        <begin position="647"/>
        <end position="687"/>
    </location>
</feature>
<feature type="repeat" description="ARM 8">
    <location>
        <begin position="700"/>
        <end position="739"/>
    </location>
</feature>
<feature type="repeat" description="ARM 9">
    <location>
        <begin position="740"/>
        <end position="782"/>
    </location>
</feature>
<feature type="repeat" description="ARM 10">
    <location>
        <begin position="783"/>
        <end position="827"/>
    </location>
</feature>
<feature type="region of interest" description="Disordered" evidence="4">
    <location>
        <begin position="95"/>
        <end position="123"/>
    </location>
</feature>
<feature type="region of interest" description="Disordered" evidence="4">
    <location>
        <begin position="233"/>
        <end position="255"/>
    </location>
</feature>
<feature type="region of interest" description="Disordered" evidence="4">
    <location>
        <begin position="268"/>
        <end position="291"/>
    </location>
</feature>
<feature type="region of interest" description="Disordered" evidence="4">
    <location>
        <begin position="322"/>
        <end position="357"/>
    </location>
</feature>
<feature type="region of interest" description="Disordered" evidence="4">
    <location>
        <begin position="593"/>
        <end position="618"/>
    </location>
</feature>
<feature type="region of interest" description="Required for interaction with RNA-binding proteins DDX5, HNRNPH2 and SRSF1 and with mRNAs" evidence="2">
    <location>
        <begin position="777"/>
        <end position="962"/>
    </location>
</feature>
<feature type="region of interest" description="Disordered" evidence="4">
    <location>
        <begin position="844"/>
        <end position="962"/>
    </location>
</feature>
<feature type="coiled-coil region" evidence="3">
    <location>
        <begin position="11"/>
        <end position="46"/>
    </location>
</feature>
<feature type="short sequence motif" description="Nuclear localization signal" evidence="3">
    <location>
        <begin position="608"/>
        <end position="624"/>
    </location>
</feature>
<feature type="compositionally biased region" description="Polar residues" evidence="4">
    <location>
        <begin position="103"/>
        <end position="115"/>
    </location>
</feature>
<feature type="compositionally biased region" description="Acidic residues" evidence="4">
    <location>
        <begin position="272"/>
        <end position="282"/>
    </location>
</feature>
<feature type="compositionally biased region" description="Basic and acidic residues" evidence="4">
    <location>
        <begin position="878"/>
        <end position="887"/>
    </location>
</feature>
<feature type="compositionally biased region" description="Basic and acidic residues" evidence="4">
    <location>
        <begin position="920"/>
        <end position="932"/>
    </location>
</feature>
<feature type="modified residue" description="Phosphothreonine" evidence="2">
    <location>
        <position position="103"/>
    </location>
</feature>
<feature type="modified residue" description="Phosphothreonine" evidence="2">
    <location>
        <position position="105"/>
    </location>
</feature>
<feature type="modified residue" description="Omega-N-methylarginine" evidence="12">
    <location>
        <position position="171"/>
    </location>
</feature>
<feature type="modified residue" description="Phosphoserine" evidence="9 10 11">
    <location>
        <position position="269"/>
    </location>
</feature>
<feature type="modified residue" description="Phosphoserine" evidence="11">
    <location>
        <position position="334"/>
    </location>
</feature>
<feature type="modified residue" description="Phosphoserine" evidence="11">
    <location>
        <position position="337"/>
    </location>
</feature>
<feature type="modified residue" description="Phosphoserine" evidence="2">
    <location>
        <position position="345"/>
    </location>
</feature>
<feature type="modified residue" description="Phosphoserine" evidence="2">
    <location>
        <position position="347"/>
    </location>
</feature>
<feature type="modified residue" description="Phosphoserine" evidence="2">
    <location>
        <position position="607"/>
    </location>
</feature>
<feature type="modified residue" description="Phosphothreonine" evidence="11">
    <location>
        <position position="643"/>
    </location>
</feature>
<feature type="modified residue" description="Phosphoserine" evidence="2">
    <location>
        <position position="864"/>
    </location>
</feature>
<feature type="modified residue" description="Phosphoserine" evidence="2">
    <location>
        <position position="871"/>
    </location>
</feature>
<feature type="modified residue" description="Phosphothreonine" evidence="2">
    <location>
        <position position="872"/>
    </location>
</feature>
<feature type="splice variant" id="VSP_014922" description="In isoform 4 and isoform 5." evidence="6 7">
    <original>MEDCNVHSAASILASVKEQEARFERLTRALEQERRHVALQLERAQQPGMSSGGMVGSGQPLPMAWQQLVL</original>
    <variation>MPAELR</variation>
    <location>
        <begin position="1"/>
        <end position="70"/>
    </location>
</feature>
<feature type="splice variant" id="VSP_014923" description="In isoform 2 and isoform 4." evidence="5 6 7">
    <location>
        <begin position="625"/>
        <end position="630"/>
    </location>
</feature>
<feature type="sequence conflict" description="In Ref. 3; AAH56980." evidence="8" ref="3">
    <original>E</original>
    <variation>G</variation>
    <location>
        <position position="72"/>
    </location>
</feature>
<feature type="sequence conflict" description="In Ref. 2; BAC39302." evidence="8" ref="2">
    <original>P</original>
    <variation>T</variation>
    <location>
        <position position="372"/>
    </location>
</feature>
<feature type="sequence conflict" description="In Ref. 1; AAK64214/AAK64215/AAK64216/AAK64217." evidence="8" ref="1">
    <original>R</original>
    <variation>L</variation>
    <location>
        <position position="504"/>
    </location>
</feature>
<feature type="sequence conflict" description="In Ref. 2; BAC39302." evidence="8" ref="2">
    <original>V</original>
    <variation>E</variation>
    <location>
        <position position="560"/>
    </location>
</feature>
<feature type="sequence conflict" description="In Ref. 2; BAC39302." evidence="8" ref="2">
    <original>N</original>
    <variation>K</variation>
    <location>
        <position position="761"/>
    </location>
</feature>
<reference key="1">
    <citation type="submission" date="2000-07" db="EMBL/GenBank/DDBJ databases">
        <title>Developmental expression analysis of Arvcf, a candidate gene for velo-cardio-facial syndrome.</title>
        <authorList>
            <person name="Saint-Jore B."/>
            <person name="Puech A."/>
            <person name="Merscher S."/>
            <person name="Xu H."/>
            <person name="Kucherlapati R."/>
            <person name="Skoultchi A."/>
        </authorList>
    </citation>
    <scope>NUCLEOTIDE SEQUENCE [MRNA] (ISOFORMS 1; 2; 4 AND 5)</scope>
    <source>
        <strain>C57BL/6J</strain>
    </source>
</reference>
<reference key="2">
    <citation type="journal article" date="2005" name="Science">
        <title>The transcriptional landscape of the mammalian genome.</title>
        <authorList>
            <person name="Carninci P."/>
            <person name="Kasukawa T."/>
            <person name="Katayama S."/>
            <person name="Gough J."/>
            <person name="Frith M.C."/>
            <person name="Maeda N."/>
            <person name="Oyama R."/>
            <person name="Ravasi T."/>
            <person name="Lenhard B."/>
            <person name="Wells C."/>
            <person name="Kodzius R."/>
            <person name="Shimokawa K."/>
            <person name="Bajic V.B."/>
            <person name="Brenner S.E."/>
            <person name="Batalov S."/>
            <person name="Forrest A.R."/>
            <person name="Zavolan M."/>
            <person name="Davis M.J."/>
            <person name="Wilming L.G."/>
            <person name="Aidinis V."/>
            <person name="Allen J.E."/>
            <person name="Ambesi-Impiombato A."/>
            <person name="Apweiler R."/>
            <person name="Aturaliya R.N."/>
            <person name="Bailey T.L."/>
            <person name="Bansal M."/>
            <person name="Baxter L."/>
            <person name="Beisel K.W."/>
            <person name="Bersano T."/>
            <person name="Bono H."/>
            <person name="Chalk A.M."/>
            <person name="Chiu K.P."/>
            <person name="Choudhary V."/>
            <person name="Christoffels A."/>
            <person name="Clutterbuck D.R."/>
            <person name="Crowe M.L."/>
            <person name="Dalla E."/>
            <person name="Dalrymple B.P."/>
            <person name="de Bono B."/>
            <person name="Della Gatta G."/>
            <person name="di Bernardo D."/>
            <person name="Down T."/>
            <person name="Engstrom P."/>
            <person name="Fagiolini M."/>
            <person name="Faulkner G."/>
            <person name="Fletcher C.F."/>
            <person name="Fukushima T."/>
            <person name="Furuno M."/>
            <person name="Futaki S."/>
            <person name="Gariboldi M."/>
            <person name="Georgii-Hemming P."/>
            <person name="Gingeras T.R."/>
            <person name="Gojobori T."/>
            <person name="Green R.E."/>
            <person name="Gustincich S."/>
            <person name="Harbers M."/>
            <person name="Hayashi Y."/>
            <person name="Hensch T.K."/>
            <person name="Hirokawa N."/>
            <person name="Hill D."/>
            <person name="Huminiecki L."/>
            <person name="Iacono M."/>
            <person name="Ikeo K."/>
            <person name="Iwama A."/>
            <person name="Ishikawa T."/>
            <person name="Jakt M."/>
            <person name="Kanapin A."/>
            <person name="Katoh M."/>
            <person name="Kawasawa Y."/>
            <person name="Kelso J."/>
            <person name="Kitamura H."/>
            <person name="Kitano H."/>
            <person name="Kollias G."/>
            <person name="Krishnan S.P."/>
            <person name="Kruger A."/>
            <person name="Kummerfeld S.K."/>
            <person name="Kurochkin I.V."/>
            <person name="Lareau L.F."/>
            <person name="Lazarevic D."/>
            <person name="Lipovich L."/>
            <person name="Liu J."/>
            <person name="Liuni S."/>
            <person name="McWilliam S."/>
            <person name="Madan Babu M."/>
            <person name="Madera M."/>
            <person name="Marchionni L."/>
            <person name="Matsuda H."/>
            <person name="Matsuzawa S."/>
            <person name="Miki H."/>
            <person name="Mignone F."/>
            <person name="Miyake S."/>
            <person name="Morris K."/>
            <person name="Mottagui-Tabar S."/>
            <person name="Mulder N."/>
            <person name="Nakano N."/>
            <person name="Nakauchi H."/>
            <person name="Ng P."/>
            <person name="Nilsson R."/>
            <person name="Nishiguchi S."/>
            <person name="Nishikawa S."/>
            <person name="Nori F."/>
            <person name="Ohara O."/>
            <person name="Okazaki Y."/>
            <person name="Orlando V."/>
            <person name="Pang K.C."/>
            <person name="Pavan W.J."/>
            <person name="Pavesi G."/>
            <person name="Pesole G."/>
            <person name="Petrovsky N."/>
            <person name="Piazza S."/>
            <person name="Reed J."/>
            <person name="Reid J.F."/>
            <person name="Ring B.Z."/>
            <person name="Ringwald M."/>
            <person name="Rost B."/>
            <person name="Ruan Y."/>
            <person name="Salzberg S.L."/>
            <person name="Sandelin A."/>
            <person name="Schneider C."/>
            <person name="Schoenbach C."/>
            <person name="Sekiguchi K."/>
            <person name="Semple C.A."/>
            <person name="Seno S."/>
            <person name="Sessa L."/>
            <person name="Sheng Y."/>
            <person name="Shibata Y."/>
            <person name="Shimada H."/>
            <person name="Shimada K."/>
            <person name="Silva D."/>
            <person name="Sinclair B."/>
            <person name="Sperling S."/>
            <person name="Stupka E."/>
            <person name="Sugiura K."/>
            <person name="Sultana R."/>
            <person name="Takenaka Y."/>
            <person name="Taki K."/>
            <person name="Tammoja K."/>
            <person name="Tan S.L."/>
            <person name="Tang S."/>
            <person name="Taylor M.S."/>
            <person name="Tegner J."/>
            <person name="Teichmann S.A."/>
            <person name="Ueda H.R."/>
            <person name="van Nimwegen E."/>
            <person name="Verardo R."/>
            <person name="Wei C.L."/>
            <person name="Yagi K."/>
            <person name="Yamanishi H."/>
            <person name="Zabarovsky E."/>
            <person name="Zhu S."/>
            <person name="Zimmer A."/>
            <person name="Hide W."/>
            <person name="Bult C."/>
            <person name="Grimmond S.M."/>
            <person name="Teasdale R.D."/>
            <person name="Liu E.T."/>
            <person name="Brusic V."/>
            <person name="Quackenbush J."/>
            <person name="Wahlestedt C."/>
            <person name="Mattick J.S."/>
            <person name="Hume D.A."/>
            <person name="Kai C."/>
            <person name="Sasaki D."/>
            <person name="Tomaru Y."/>
            <person name="Fukuda S."/>
            <person name="Kanamori-Katayama M."/>
            <person name="Suzuki M."/>
            <person name="Aoki J."/>
            <person name="Arakawa T."/>
            <person name="Iida J."/>
            <person name="Imamura K."/>
            <person name="Itoh M."/>
            <person name="Kato T."/>
            <person name="Kawaji H."/>
            <person name="Kawagashira N."/>
            <person name="Kawashima T."/>
            <person name="Kojima M."/>
            <person name="Kondo S."/>
            <person name="Konno H."/>
            <person name="Nakano K."/>
            <person name="Ninomiya N."/>
            <person name="Nishio T."/>
            <person name="Okada M."/>
            <person name="Plessy C."/>
            <person name="Shibata K."/>
            <person name="Shiraki T."/>
            <person name="Suzuki S."/>
            <person name="Tagami M."/>
            <person name="Waki K."/>
            <person name="Watahiki A."/>
            <person name="Okamura-Oho Y."/>
            <person name="Suzuki H."/>
            <person name="Kawai J."/>
            <person name="Hayashizaki Y."/>
        </authorList>
    </citation>
    <scope>NUCLEOTIDE SEQUENCE [LARGE SCALE MRNA] (ISOFORMS 2; 4 AND 5)</scope>
    <source>
        <strain>C57BL/6J</strain>
        <tissue>Embryonic ganglion</tissue>
        <tissue>Embryonic lung</tissue>
    </source>
</reference>
<reference key="3">
    <citation type="journal article" date="2004" name="Genome Res.">
        <title>The status, quality, and expansion of the NIH full-length cDNA project: the Mammalian Gene Collection (MGC).</title>
        <authorList>
            <consortium name="The MGC Project Team"/>
        </authorList>
    </citation>
    <scope>NUCLEOTIDE SEQUENCE [LARGE SCALE MRNA] (ISOFORM 1)</scope>
    <source>
        <strain>C57BL/6J</strain>
        <tissue>Brain</tissue>
    </source>
</reference>
<reference key="4">
    <citation type="journal article" date="2000" name="J. Cell Sci.">
        <title>The armadillo repeat region targets ARVCF to cadherin-based cellular junctions.</title>
        <authorList>
            <person name="Kaufmann U."/>
            <person name="Zuppinger C."/>
            <person name="Waibler Z."/>
            <person name="Rudiger M."/>
            <person name="Urbich C."/>
            <person name="Martin B."/>
            <person name="Jockusch B.M."/>
            <person name="Eppenberger H."/>
            <person name="Starzinski-Powitz A."/>
        </authorList>
    </citation>
    <scope>NUCLEOTIDE SEQUENCE [MRNA] OF 8-927 (ISOFORM 2)</scope>
</reference>
<reference key="5">
    <citation type="journal article" date="2004" name="Mol. Cell. Proteomics">
        <title>Phosphoproteomic analysis of the developing mouse brain.</title>
        <authorList>
            <person name="Ballif B.A."/>
            <person name="Villen J."/>
            <person name="Beausoleil S.A."/>
            <person name="Schwartz D."/>
            <person name="Gygi S.P."/>
        </authorList>
    </citation>
    <scope>PHOSPHORYLATION [LARGE SCALE ANALYSIS] AT SER-269</scope>
    <scope>IDENTIFICATION BY MASS SPECTROMETRY [LARGE SCALE ANALYSIS]</scope>
    <source>
        <tissue>Embryonic brain</tissue>
    </source>
</reference>
<reference key="6">
    <citation type="journal article" date="2007" name="Proc. Natl. Acad. Sci. U.S.A.">
        <title>Large-scale phosphorylation analysis of mouse liver.</title>
        <authorList>
            <person name="Villen J."/>
            <person name="Beausoleil S.A."/>
            <person name="Gerber S.A."/>
            <person name="Gygi S.P."/>
        </authorList>
    </citation>
    <scope>PHOSPHORYLATION [LARGE SCALE ANALYSIS] AT SER-269</scope>
    <scope>IDENTIFICATION BY MASS SPECTROMETRY [LARGE SCALE ANALYSIS]</scope>
    <source>
        <tissue>Liver</tissue>
    </source>
</reference>
<reference key="7">
    <citation type="journal article" date="2010" name="Cell">
        <title>A tissue-specific atlas of mouse protein phosphorylation and expression.</title>
        <authorList>
            <person name="Huttlin E.L."/>
            <person name="Jedrychowski M.P."/>
            <person name="Elias J.E."/>
            <person name="Goswami T."/>
            <person name="Rad R."/>
            <person name="Beausoleil S.A."/>
            <person name="Villen J."/>
            <person name="Haas W."/>
            <person name="Sowa M.E."/>
            <person name="Gygi S.P."/>
        </authorList>
    </citation>
    <scope>PHOSPHORYLATION [LARGE SCALE ANALYSIS] AT SER-269; SER-334; SER-337 AND THR-643</scope>
    <scope>IDENTIFICATION BY MASS SPECTROMETRY [LARGE SCALE ANALYSIS]</scope>
    <source>
        <tissue>Brain</tissue>
        <tissue>Brown adipose tissue</tissue>
        <tissue>Heart</tissue>
        <tissue>Kidney</tissue>
        <tissue>Liver</tissue>
        <tissue>Lung</tissue>
        <tissue>Pancreas</tissue>
        <tissue>Spleen</tissue>
        <tissue>Testis</tissue>
    </source>
</reference>
<reference key="8">
    <citation type="journal article" date="2014" name="Mol. Cell. Proteomics">
        <title>Immunoaffinity enrichment and mass spectrometry analysis of protein methylation.</title>
        <authorList>
            <person name="Guo A."/>
            <person name="Gu H."/>
            <person name="Zhou J."/>
            <person name="Mulhern D."/>
            <person name="Wang Y."/>
            <person name="Lee K.A."/>
            <person name="Yang V."/>
            <person name="Aguiar M."/>
            <person name="Kornhauser J."/>
            <person name="Jia X."/>
            <person name="Ren J."/>
            <person name="Beausoleil S.A."/>
            <person name="Silva J.C."/>
            <person name="Vemulapalli V."/>
            <person name="Bedford M.T."/>
            <person name="Comb M.J."/>
        </authorList>
    </citation>
    <scope>METHYLATION [LARGE SCALE ANALYSIS] AT ARG-171</scope>
    <scope>IDENTIFICATION BY MASS SPECTROMETRY [LARGE SCALE ANALYSIS]</scope>
    <source>
        <tissue>Brain</tissue>
    </source>
</reference>
<sequence>MEDCNVHSAASILASVKEQEARFERLTRALEQERRHVALQLERAQQPGMSSGGMVGSGQPLPMAWQQLVLQEQSPGSQASLATMPEAPEVLEETVTVEEDPGTPTSHVSIVTSEDGTTRRTETKVTKTVKTVTTRTVRQVPLGPDGLPLLDGGPPLGSFADGPLDRHYLLRGGGGPAATLSRTYHSSGGGFPDGPESRDIPSYGSLSRGLGVRPPRTGLLGPGPGDGCFTLPGRREAFPMGSESGPPSGRSLPEHFQAEPYGLEDDTRSLAADDEGGPDLEPDYSTATRRRPEYGRGLRARAFEDTADDAGELIEERPPFPAATAPLAQPERGSLGSLDRVVRRSPSVDSTRKEPRWRDPELPEVLAMLRHPVDPVKANAAAYLQHLCFENEGIKRRVRQLRGLPLLVALLDHPRAEVRRRACGALRNLSYGRDTDNKAAIRDCGGVPALVRLLRAARDNEVRELVTGTLWNLSSYEPLKMVIIDHGLQTLTHEVIVPHSGWEREPNEDSKPRDAEWTTVFKNTSGCLRNVSSDGAEARRRLRECEGLVDALLHALQSAVGRKDTDNKSVENCVCIMRNLSYHVHKEVPGADRYQEAEPGIPGSTTSQRRRKDDASCFGGKKAKEEWFHQGKKDAEMDRNFDTLDLPKRTEAAKGFELLYQPEVVRLYLSLLTESRNFNTLEAAAGALQNLSAGNWTWATYIRATVRKERGLPVLVELLQSETDKVVRAVAIALRNLSLDQRNKDLIGSYAMTELVRNVRNAQAPAHPSAHLEEDTVVAVLNTIHEIVSDSLDNARSLLQARGVPALVALVASSQSVREAKAASHVLQTVWSYKELRGALQRDGWTKSRFQSASTAKGPKGTPSSGGFDDSTLPLVDKSLDGEKSNTRDVIPMDTLGPDGYATVDRRERRTLGSDSTGDTSEKELLRPDPGRKAPPPGPSRPSVRLVDAVGDTKPQPVDSWV</sequence>
<keyword id="KW-0025">Alternative splicing</keyword>
<keyword id="KW-0130">Cell adhesion</keyword>
<keyword id="KW-0965">Cell junction</keyword>
<keyword id="KW-0175">Coiled coil</keyword>
<keyword id="KW-0963">Cytoplasm</keyword>
<keyword id="KW-0488">Methylation</keyword>
<keyword id="KW-0507">mRNA processing</keyword>
<keyword id="KW-0508">mRNA splicing</keyword>
<keyword id="KW-0539">Nucleus</keyword>
<keyword id="KW-0597">Phosphoprotein</keyword>
<keyword id="KW-1185">Reference proteome</keyword>
<keyword id="KW-0677">Repeat</keyword>
<evidence type="ECO:0000250" key="1">
    <source>
        <dbReference type="UniProtKB" id="B4F7F3"/>
    </source>
</evidence>
<evidence type="ECO:0000250" key="2">
    <source>
        <dbReference type="UniProtKB" id="O00192"/>
    </source>
</evidence>
<evidence type="ECO:0000255" key="3"/>
<evidence type="ECO:0000256" key="4">
    <source>
        <dbReference type="SAM" id="MobiDB-lite"/>
    </source>
</evidence>
<evidence type="ECO:0000303" key="5">
    <source>
    </source>
</evidence>
<evidence type="ECO:0000303" key="6">
    <source>
    </source>
</evidence>
<evidence type="ECO:0000303" key="7">
    <source ref="1"/>
</evidence>
<evidence type="ECO:0000305" key="8"/>
<evidence type="ECO:0007744" key="9">
    <source>
    </source>
</evidence>
<evidence type="ECO:0007744" key="10">
    <source>
    </source>
</evidence>
<evidence type="ECO:0007744" key="11">
    <source>
    </source>
</evidence>
<evidence type="ECO:0007744" key="12">
    <source>
    </source>
</evidence>
<dbReference type="EMBL" id="AF286212">
    <property type="protein sequence ID" value="AAK64214.1"/>
    <property type="molecule type" value="mRNA"/>
</dbReference>
<dbReference type="EMBL" id="AF286213">
    <property type="protein sequence ID" value="AAK64215.1"/>
    <property type="molecule type" value="mRNA"/>
</dbReference>
<dbReference type="EMBL" id="AF286214">
    <property type="protein sequence ID" value="AAK64216.1"/>
    <property type="molecule type" value="mRNA"/>
</dbReference>
<dbReference type="EMBL" id="AF286215">
    <property type="protein sequence ID" value="AAK64217.1"/>
    <property type="molecule type" value="mRNA"/>
</dbReference>
<dbReference type="EMBL" id="AK044982">
    <property type="protein sequence ID" value="BAC32169.1"/>
    <property type="molecule type" value="mRNA"/>
</dbReference>
<dbReference type="EMBL" id="AK051627">
    <property type="protein sequence ID" value="BAC34696.1"/>
    <property type="molecule type" value="mRNA"/>
</dbReference>
<dbReference type="EMBL" id="AK084886">
    <property type="protein sequence ID" value="BAC39302.1"/>
    <property type="molecule type" value="mRNA"/>
</dbReference>
<dbReference type="EMBL" id="BC056980">
    <property type="protein sequence ID" value="AAH56980.1"/>
    <property type="molecule type" value="mRNA"/>
</dbReference>
<dbReference type="EMBL" id="AJ243418">
    <property type="status" value="NOT_ANNOTATED_CDS"/>
    <property type="molecule type" value="mRNA"/>
</dbReference>
<dbReference type="CCDS" id="CCDS28020.1">
    <molecule id="P98203-1"/>
</dbReference>
<dbReference type="CCDS" id="CCDS70693.1">
    <molecule id="P98203-2"/>
</dbReference>
<dbReference type="CCDS" id="CCDS70694.1">
    <molecule id="P98203-4"/>
</dbReference>
<dbReference type="CCDS" id="CCDS88894.1">
    <molecule id="P98203-5"/>
</dbReference>
<dbReference type="RefSeq" id="NP_001258957.1">
    <molecule id="P98203-1"/>
    <property type="nucleotide sequence ID" value="NM_001272028.1"/>
</dbReference>
<dbReference type="RefSeq" id="NP_001258958.1">
    <molecule id="P98203-2"/>
    <property type="nucleotide sequence ID" value="NM_001272029.1"/>
</dbReference>
<dbReference type="RefSeq" id="NP_001258959.1">
    <molecule id="P98203-2"/>
    <property type="nucleotide sequence ID" value="NM_001272030.1"/>
</dbReference>
<dbReference type="RefSeq" id="NP_001258960.1">
    <molecule id="P98203-5"/>
    <property type="nucleotide sequence ID" value="NM_001272031.2"/>
</dbReference>
<dbReference type="RefSeq" id="NP_001258961.1">
    <molecule id="P98203-4"/>
    <property type="nucleotide sequence ID" value="NM_001272032.2"/>
</dbReference>
<dbReference type="RefSeq" id="NP_258435.2">
    <molecule id="P98203-1"/>
    <property type="nucleotide sequence ID" value="NM_033474.3"/>
</dbReference>
<dbReference type="SMR" id="P98203"/>
<dbReference type="BioGRID" id="198214">
    <property type="interactions" value="12"/>
</dbReference>
<dbReference type="FunCoup" id="P98203">
    <property type="interactions" value="618"/>
</dbReference>
<dbReference type="IntAct" id="P98203">
    <property type="interactions" value="3"/>
</dbReference>
<dbReference type="MINT" id="P98203"/>
<dbReference type="STRING" id="10090.ENSMUSP00000087562"/>
<dbReference type="GlyGen" id="P98203">
    <property type="glycosylation" value="2 sites, 2 N-linked glycans (2 sites)"/>
</dbReference>
<dbReference type="iPTMnet" id="P98203"/>
<dbReference type="PhosphoSitePlus" id="P98203"/>
<dbReference type="SwissPalm" id="P98203"/>
<dbReference type="PaxDb" id="10090-ENSMUSP00000111276"/>
<dbReference type="PeptideAtlas" id="P98203"/>
<dbReference type="ProteomicsDB" id="265108">
    <molecule id="P98203-1"/>
</dbReference>
<dbReference type="ProteomicsDB" id="265109">
    <molecule id="P98203-2"/>
</dbReference>
<dbReference type="ProteomicsDB" id="265110">
    <molecule id="P98203-4"/>
</dbReference>
<dbReference type="ProteomicsDB" id="265111">
    <molecule id="P98203-5"/>
</dbReference>
<dbReference type="Pumba" id="P98203"/>
<dbReference type="Antibodypedia" id="4255">
    <property type="antibodies" value="87 antibodies from 23 providers"/>
</dbReference>
<dbReference type="DNASU" id="11877"/>
<dbReference type="Ensembl" id="ENSMUST00000239533.1">
    <molecule id="P98203-2"/>
    <property type="protein sequence ID" value="ENSMUSP00000159425.2"/>
    <property type="gene ID" value="ENSMUSG00000118669.2"/>
</dbReference>
<dbReference type="Ensembl" id="ENSMUST00000239534.1">
    <molecule id="P98203-1"/>
    <property type="protein sequence ID" value="ENSMUSP00000159426.2"/>
    <property type="gene ID" value="ENSMUSG00000118669.2"/>
</dbReference>
<dbReference type="Ensembl" id="ENSMUST00000239535.1">
    <molecule id="P98203-1"/>
    <property type="protein sequence ID" value="ENSMUSP00000159427.2"/>
    <property type="gene ID" value="ENSMUSG00000118669.2"/>
</dbReference>
<dbReference type="Ensembl" id="ENSMUST00000239536.1">
    <molecule id="P98203-2"/>
    <property type="protein sequence ID" value="ENSMUSP00000159428.2"/>
    <property type="gene ID" value="ENSMUSG00000118669.2"/>
</dbReference>
<dbReference type="Ensembl" id="ENSMUST00000239538.1">
    <molecule id="P98203-4"/>
    <property type="protein sequence ID" value="ENSMUSP00000159429.2"/>
    <property type="gene ID" value="ENSMUSG00000118669.2"/>
</dbReference>
<dbReference type="Ensembl" id="ENSMUST00000239547.1">
    <molecule id="P98203-4"/>
    <property type="protein sequence ID" value="ENSMUSP00000159437.2"/>
    <property type="gene ID" value="ENSMUSG00000118669.2"/>
</dbReference>
<dbReference type="Ensembl" id="ENSMUST00000239548.1">
    <molecule id="P98203-5"/>
    <property type="protein sequence ID" value="ENSMUSP00000159438.2"/>
    <property type="gene ID" value="ENSMUSG00000118669.2"/>
</dbReference>
<dbReference type="GeneID" id="11877"/>
<dbReference type="KEGG" id="mmu:11877"/>
<dbReference type="UCSC" id="uc007ynl.2">
    <molecule id="P98203-1"/>
    <property type="organism name" value="mouse"/>
</dbReference>
<dbReference type="UCSC" id="uc007ynm.2">
    <molecule id="P98203-2"/>
    <property type="organism name" value="mouse"/>
</dbReference>
<dbReference type="UCSC" id="uc007ynq.2">
    <molecule id="P98203-5"/>
    <property type="organism name" value="mouse"/>
</dbReference>
<dbReference type="UCSC" id="uc007yns.2">
    <molecule id="P98203-4"/>
    <property type="organism name" value="mouse"/>
</dbReference>
<dbReference type="AGR" id="MGI:109620"/>
<dbReference type="CTD" id="421"/>
<dbReference type="MGI" id="MGI:109620">
    <property type="gene designation" value="Arvcf"/>
</dbReference>
<dbReference type="VEuPathDB" id="HostDB:ENSMUSG00000000325"/>
<dbReference type="eggNOG" id="KOG1048">
    <property type="taxonomic scope" value="Eukaryota"/>
</dbReference>
<dbReference type="GeneTree" id="ENSGT00940000157027"/>
<dbReference type="HOGENOM" id="CLU_009111_1_0_1"/>
<dbReference type="InParanoid" id="P98203"/>
<dbReference type="OMA" id="XFELLYQ"/>
<dbReference type="OrthoDB" id="3245100at2759"/>
<dbReference type="PhylomeDB" id="P98203"/>
<dbReference type="TreeFam" id="TF321877"/>
<dbReference type="BioGRID-ORCS" id="11877">
    <property type="hits" value="2 hits in 78 CRISPR screens"/>
</dbReference>
<dbReference type="CD-CODE" id="CE726F99">
    <property type="entry name" value="Postsynaptic density"/>
</dbReference>
<dbReference type="ChiTaRS" id="Arvcf">
    <property type="organism name" value="mouse"/>
</dbReference>
<dbReference type="PRO" id="PR:P98203"/>
<dbReference type="Proteomes" id="UP000000589">
    <property type="component" value="Chromosome 16"/>
</dbReference>
<dbReference type="RNAct" id="P98203">
    <property type="molecule type" value="protein"/>
</dbReference>
<dbReference type="ExpressionAtlas" id="P98203">
    <property type="expression patterns" value="baseline and differential"/>
</dbReference>
<dbReference type="GO" id="GO:0005912">
    <property type="term" value="C:adherens junction"/>
    <property type="evidence" value="ECO:0000250"/>
    <property type="project" value="UniProtKB"/>
</dbReference>
<dbReference type="GO" id="GO:0005737">
    <property type="term" value="C:cytoplasm"/>
    <property type="evidence" value="ECO:0000314"/>
    <property type="project" value="MGI"/>
</dbReference>
<dbReference type="GO" id="GO:0005634">
    <property type="term" value="C:nucleus"/>
    <property type="evidence" value="ECO:0000314"/>
    <property type="project" value="MGI"/>
</dbReference>
<dbReference type="GO" id="GO:0005886">
    <property type="term" value="C:plasma membrane"/>
    <property type="evidence" value="ECO:0000314"/>
    <property type="project" value="MGI"/>
</dbReference>
<dbReference type="GO" id="GO:0045296">
    <property type="term" value="F:cadherin binding"/>
    <property type="evidence" value="ECO:0000250"/>
    <property type="project" value="UniProtKB"/>
</dbReference>
<dbReference type="GO" id="GO:0016339">
    <property type="term" value="P:calcium-dependent cell-cell adhesion via plasma membrane cell adhesion molecules"/>
    <property type="evidence" value="ECO:0000304"/>
    <property type="project" value="MGI"/>
</dbReference>
<dbReference type="GO" id="GO:0006397">
    <property type="term" value="P:mRNA processing"/>
    <property type="evidence" value="ECO:0007669"/>
    <property type="project" value="UniProtKB-KW"/>
</dbReference>
<dbReference type="GO" id="GO:0008380">
    <property type="term" value="P:RNA splicing"/>
    <property type="evidence" value="ECO:0000250"/>
    <property type="project" value="UniProtKB"/>
</dbReference>
<dbReference type="FunFam" id="1.25.10.10:FF:000007">
    <property type="entry name" value="ARVCF, delta catenin family member"/>
    <property type="match status" value="1"/>
</dbReference>
<dbReference type="Gene3D" id="1.25.10.10">
    <property type="entry name" value="Leucine-rich Repeat Variant"/>
    <property type="match status" value="1"/>
</dbReference>
<dbReference type="InterPro" id="IPR011989">
    <property type="entry name" value="ARM-like"/>
</dbReference>
<dbReference type="InterPro" id="IPR016024">
    <property type="entry name" value="ARM-type_fold"/>
</dbReference>
<dbReference type="InterPro" id="IPR000225">
    <property type="entry name" value="Armadillo"/>
</dbReference>
<dbReference type="InterPro" id="IPR028435">
    <property type="entry name" value="Plakophilin/d_Catenin"/>
</dbReference>
<dbReference type="PANTHER" id="PTHR10372">
    <property type="entry name" value="PLAKOPHILLIN-RELATED"/>
    <property type="match status" value="1"/>
</dbReference>
<dbReference type="PANTHER" id="PTHR10372:SF5">
    <property type="entry name" value="SPLICING REGULATOR ARVCF"/>
    <property type="match status" value="1"/>
</dbReference>
<dbReference type="Pfam" id="PF00514">
    <property type="entry name" value="Arm"/>
    <property type="match status" value="4"/>
</dbReference>
<dbReference type="SMART" id="SM00185">
    <property type="entry name" value="ARM"/>
    <property type="match status" value="6"/>
</dbReference>
<dbReference type="SUPFAM" id="SSF48371">
    <property type="entry name" value="ARM repeat"/>
    <property type="match status" value="1"/>
</dbReference>
<dbReference type="PROSITE" id="PS50176">
    <property type="entry name" value="ARM_REPEAT"/>
    <property type="match status" value="3"/>
</dbReference>
<gene>
    <name type="primary">Arvcf</name>
</gene>
<organism>
    <name type="scientific">Mus musculus</name>
    <name type="common">Mouse</name>
    <dbReference type="NCBI Taxonomy" id="10090"/>
    <lineage>
        <taxon>Eukaryota</taxon>
        <taxon>Metazoa</taxon>
        <taxon>Chordata</taxon>
        <taxon>Craniata</taxon>
        <taxon>Vertebrata</taxon>
        <taxon>Euteleostomi</taxon>
        <taxon>Mammalia</taxon>
        <taxon>Eutheria</taxon>
        <taxon>Euarchontoglires</taxon>
        <taxon>Glires</taxon>
        <taxon>Rodentia</taxon>
        <taxon>Myomorpha</taxon>
        <taxon>Muroidea</taxon>
        <taxon>Muridae</taxon>
        <taxon>Murinae</taxon>
        <taxon>Mus</taxon>
        <taxon>Mus</taxon>
    </lineage>
</organism>